<protein>
    <recommendedName>
        <fullName>Rhamnosyl O-methyltransferase</fullName>
        <ecNumber>2.1.1.-</ecNumber>
    </recommendedName>
</protein>
<name>RNMT_MYCTU</name>
<keyword id="KW-0444">Lipid biosynthesis</keyword>
<keyword id="KW-0443">Lipid metabolism</keyword>
<keyword id="KW-0489">Methyltransferase</keyword>
<keyword id="KW-1185">Reference proteome</keyword>
<keyword id="KW-0732">Signal</keyword>
<keyword id="KW-0808">Transferase</keyword>
<sequence length="245" mass="27845">MGLVWRSRTSLVGQLIGLVRLVASFAAQLFYRPSDAVAEEYHKWYYGNLVWTKTTYMGINCWKSVSDMWNYQEILSELQPSLVIEFGTRYGGSAVYFANIMRQIGQPFKVLTVDNSHKALDPRARREPDVLFVESSSTDPAIAEQIQRLKNEYPGKIFAILDSDHSMNHVLAEMKLLRPLLSAGDYLVVEDSNINGHPVLPGFGPGPYEAIEAYEDEFPNDYKHDAERENKFGWTSAPNGFLIRN</sequence>
<reference key="1">
    <citation type="submission" date="1994-09" db="EMBL/GenBank/DDBJ databases">
        <authorList>
            <person name="Smith D.R."/>
            <person name="Robison K."/>
        </authorList>
    </citation>
    <scope>NUCLEOTIDE SEQUENCE [GENOMIC DNA]</scope>
</reference>
<reference key="2">
    <citation type="journal article" date="1998" name="Nature">
        <title>Deciphering the biology of Mycobacterium tuberculosis from the complete genome sequence.</title>
        <authorList>
            <person name="Cole S.T."/>
            <person name="Brosch R."/>
            <person name="Parkhill J."/>
            <person name="Garnier T."/>
            <person name="Churcher C.M."/>
            <person name="Harris D.E."/>
            <person name="Gordon S.V."/>
            <person name="Eiglmeier K."/>
            <person name="Gas S."/>
            <person name="Barry C.E. III"/>
            <person name="Tekaia F."/>
            <person name="Badcock K."/>
            <person name="Basham D."/>
            <person name="Brown D."/>
            <person name="Chillingworth T."/>
            <person name="Connor R."/>
            <person name="Davies R.M."/>
            <person name="Devlin K."/>
            <person name="Feltwell T."/>
            <person name="Gentles S."/>
            <person name="Hamlin N."/>
            <person name="Holroyd S."/>
            <person name="Hornsby T."/>
            <person name="Jagels K."/>
            <person name="Krogh A."/>
            <person name="McLean J."/>
            <person name="Moule S."/>
            <person name="Murphy L.D."/>
            <person name="Oliver S."/>
            <person name="Osborne J."/>
            <person name="Quail M.A."/>
            <person name="Rajandream M.A."/>
            <person name="Rogers J."/>
            <person name="Rutter S."/>
            <person name="Seeger K."/>
            <person name="Skelton S."/>
            <person name="Squares S."/>
            <person name="Squares R."/>
            <person name="Sulston J.E."/>
            <person name="Taylor K."/>
            <person name="Whitehead S."/>
            <person name="Barrell B.G."/>
        </authorList>
    </citation>
    <scope>NUCLEOTIDE SEQUENCE [LARGE SCALE GENOMIC DNA]</scope>
    <source>
        <strain>ATCC 25618 / H37Rv</strain>
    </source>
</reference>
<reference key="3">
    <citation type="journal article" date="2004" name="J. Biol. Chem.">
        <title>Molecular dissection of the role of two methyltransferases in the biosynthesis of phenolglycolipids and phthiocerol dimycoserosate in the Mycobacterium tuberculosis complex.</title>
        <authorList>
            <person name="Perez E."/>
            <person name="Constant P."/>
            <person name="Laval F."/>
            <person name="Lemassu A."/>
            <person name="Laneelle M.-A."/>
            <person name="Daffe M."/>
            <person name="Guilhot C."/>
        </authorList>
    </citation>
    <scope>FUNCTION AS METHYLTRANSFERASE</scope>
    <source>
        <strain>ATCC 25618 / H37Rv</strain>
    </source>
</reference>
<reference key="4">
    <citation type="journal article" date="2008" name="BMC Syst. Biol.">
        <title>targetTB: a target identification pipeline for Mycobacterium tuberculosis through an interactome, reactome and genome-scale structural analysis.</title>
        <authorList>
            <person name="Raman K."/>
            <person name="Yeturu K."/>
            <person name="Chandra N."/>
        </authorList>
    </citation>
    <scope>IDENTIFICATION AS A DRUG TARGET [LARGE SCALE ANALYSIS]</scope>
</reference>
<reference key="5">
    <citation type="journal article" date="2011" name="Mol. Cell. Proteomics">
        <title>Proteogenomic analysis of Mycobacterium tuberculosis by high resolution mass spectrometry.</title>
        <authorList>
            <person name="Kelkar D.S."/>
            <person name="Kumar D."/>
            <person name="Kumar P."/>
            <person name="Balakrishnan L."/>
            <person name="Muthusamy B."/>
            <person name="Yadav A.K."/>
            <person name="Shrivastava P."/>
            <person name="Marimuthu A."/>
            <person name="Anand S."/>
            <person name="Sundaram H."/>
            <person name="Kingsbury R."/>
            <person name="Harsha H.C."/>
            <person name="Nair B."/>
            <person name="Prasad T.S."/>
            <person name="Chauhan D.S."/>
            <person name="Katoch K."/>
            <person name="Katoch V.M."/>
            <person name="Kumar P."/>
            <person name="Chaerkady R."/>
            <person name="Ramachandran S."/>
            <person name="Dash D."/>
            <person name="Pandey A."/>
        </authorList>
    </citation>
    <scope>IDENTIFICATION BY MASS SPECTROMETRY [LARGE SCALE ANALYSIS]</scope>
    <source>
        <strain>ATCC 25618 / H37Rv</strain>
    </source>
</reference>
<proteinExistence type="evidence at protein level"/>
<dbReference type="EC" id="2.1.1.-"/>
<dbReference type="EMBL" id="U00024">
    <property type="protein sequence ID" value="AAA50941.1"/>
    <property type="molecule type" value="Genomic_DNA"/>
</dbReference>
<dbReference type="EMBL" id="AL123456">
    <property type="protein sequence ID" value="CCP45763.1"/>
    <property type="molecule type" value="Genomic_DNA"/>
</dbReference>
<dbReference type="PIR" id="D70670">
    <property type="entry name" value="D70670"/>
</dbReference>
<dbReference type="RefSeq" id="NP_217475.1">
    <property type="nucleotide sequence ID" value="NC_000962.3"/>
</dbReference>
<dbReference type="RefSeq" id="WP_003414919.1">
    <property type="nucleotide sequence ID" value="NZ_NVQJ01000015.1"/>
</dbReference>
<dbReference type="SMR" id="P9WIM5"/>
<dbReference type="STRING" id="83332.Rv2959c"/>
<dbReference type="PaxDb" id="83332-Rv2959c"/>
<dbReference type="DNASU" id="887862"/>
<dbReference type="GeneID" id="887862"/>
<dbReference type="KEGG" id="mtu:Rv2959c"/>
<dbReference type="KEGG" id="mtv:RVBD_2959c"/>
<dbReference type="PATRIC" id="fig|83332.111.peg.3298"/>
<dbReference type="TubercuList" id="Rv2959c"/>
<dbReference type="eggNOG" id="COG3510">
    <property type="taxonomic scope" value="Bacteria"/>
</dbReference>
<dbReference type="InParanoid" id="P9WIM5"/>
<dbReference type="OrthoDB" id="189417at2"/>
<dbReference type="BioCyc" id="MetaCyc:G185E-7213-MONOMER"/>
<dbReference type="Proteomes" id="UP000001584">
    <property type="component" value="Chromosome"/>
</dbReference>
<dbReference type="GO" id="GO:0005886">
    <property type="term" value="C:plasma membrane"/>
    <property type="evidence" value="ECO:0007005"/>
    <property type="project" value="MTBBASE"/>
</dbReference>
<dbReference type="GO" id="GO:0008168">
    <property type="term" value="F:methyltransferase activity"/>
    <property type="evidence" value="ECO:0007669"/>
    <property type="project" value="UniProtKB-KW"/>
</dbReference>
<dbReference type="GO" id="GO:0050650">
    <property type="term" value="P:chondroitin sulfate proteoglycan biosynthetic process"/>
    <property type="evidence" value="ECO:0000315"/>
    <property type="project" value="MTBBASE"/>
</dbReference>
<dbReference type="GO" id="GO:0071770">
    <property type="term" value="P:DIM/DIP cell wall layer assembly"/>
    <property type="evidence" value="ECO:0000315"/>
    <property type="project" value="MTBBASE"/>
</dbReference>
<dbReference type="GO" id="GO:0008610">
    <property type="term" value="P:lipid biosynthetic process"/>
    <property type="evidence" value="ECO:0007669"/>
    <property type="project" value="InterPro"/>
</dbReference>
<dbReference type="GO" id="GO:0032259">
    <property type="term" value="P:methylation"/>
    <property type="evidence" value="ECO:0007669"/>
    <property type="project" value="UniProtKB-KW"/>
</dbReference>
<dbReference type="Gene3D" id="3.40.50.150">
    <property type="entry name" value="Vaccinia Virus protein VP39"/>
    <property type="match status" value="1"/>
</dbReference>
<dbReference type="InterPro" id="IPR054932">
    <property type="entry name" value="RhmsylMtase"/>
</dbReference>
<dbReference type="InterPro" id="IPR007072">
    <property type="entry name" value="RNMT_CmcI"/>
</dbReference>
<dbReference type="InterPro" id="IPR029063">
    <property type="entry name" value="SAM-dependent_MTases_sf"/>
</dbReference>
<dbReference type="NCBIfam" id="NF045824">
    <property type="entry name" value="RhmsylMtase"/>
    <property type="match status" value="1"/>
</dbReference>
<dbReference type="PANTHER" id="PTHR40048">
    <property type="entry name" value="RHAMNOSYL O-METHYLTRANSFERASE"/>
    <property type="match status" value="1"/>
</dbReference>
<dbReference type="PANTHER" id="PTHR40048:SF1">
    <property type="entry name" value="RHAMNOSYL O-METHYLTRANSFERASE"/>
    <property type="match status" value="1"/>
</dbReference>
<dbReference type="Pfam" id="PF04989">
    <property type="entry name" value="RMNT_CmcI"/>
    <property type="match status" value="1"/>
</dbReference>
<dbReference type="SUPFAM" id="SSF53335">
    <property type="entry name" value="S-adenosyl-L-methionine-dependent methyltransferases"/>
    <property type="match status" value="1"/>
</dbReference>
<feature type="signal peptide" evidence="1">
    <location>
        <begin position="1"/>
        <end position="38"/>
    </location>
</feature>
<feature type="chain" id="PRO_0000305181" description="Rhamnosyl O-methyltransferase">
    <location>
        <begin position="39"/>
        <end position="245"/>
    </location>
</feature>
<evidence type="ECO:0000255" key="1"/>
<evidence type="ECO:0000269" key="2">
    <source>
    </source>
</evidence>
<evidence type="ECO:0000305" key="3"/>
<organism>
    <name type="scientific">Mycobacterium tuberculosis (strain ATCC 25618 / H37Rv)</name>
    <dbReference type="NCBI Taxonomy" id="83332"/>
    <lineage>
        <taxon>Bacteria</taxon>
        <taxon>Bacillati</taxon>
        <taxon>Actinomycetota</taxon>
        <taxon>Actinomycetes</taxon>
        <taxon>Mycobacteriales</taxon>
        <taxon>Mycobacteriaceae</taxon>
        <taxon>Mycobacterium</taxon>
        <taxon>Mycobacterium tuberculosis complex</taxon>
    </lineage>
</organism>
<accession>P9WIM5</accession>
<accession>L0TDW5</accession>
<accession>O08024</accession>
<accession>Q50457</accession>
<accession>Q798M6</accession>
<accession>Q7D6D0</accession>
<gene>
    <name type="ordered locus">Rv2959c</name>
</gene>
<comment type="function">
    <text evidence="2">Catalyzes the O-methylation of the hydroxyl group located on C-2 of the first rhamnosyl residue linked to the phenolic group of glycosylated phenolphthiocerol dimycocerosates (PGL) and p-hydroxybenzoic acid derivatives (p-HBAD).</text>
</comment>
<comment type="miscellaneous">
    <text>Was identified as a high-confidence drug target.</text>
</comment>
<comment type="similarity">
    <text evidence="3">Belongs to the rhamnosyl O-methyltransferase family.</text>
</comment>